<name>HLDE_VIBCM</name>
<dbReference type="EC" id="2.7.1.167" evidence="1"/>
<dbReference type="EC" id="2.7.7.70" evidence="1"/>
<dbReference type="EMBL" id="CP001233">
    <property type="protein sequence ID" value="ACP06658.1"/>
    <property type="molecule type" value="Genomic_DNA"/>
</dbReference>
<dbReference type="RefSeq" id="WP_000805769.1">
    <property type="nucleotide sequence ID" value="NC_012578.1"/>
</dbReference>
<dbReference type="SMR" id="C3LQY0"/>
<dbReference type="KEGG" id="vcm:VCM66_2360"/>
<dbReference type="HOGENOM" id="CLU_021150_2_1_6"/>
<dbReference type="UniPathway" id="UPA00356">
    <property type="reaction ID" value="UER00437"/>
</dbReference>
<dbReference type="UniPathway" id="UPA00356">
    <property type="reaction ID" value="UER00439"/>
</dbReference>
<dbReference type="Proteomes" id="UP000001217">
    <property type="component" value="Chromosome I"/>
</dbReference>
<dbReference type="GO" id="GO:0005829">
    <property type="term" value="C:cytosol"/>
    <property type="evidence" value="ECO:0007669"/>
    <property type="project" value="TreeGrafter"/>
</dbReference>
<dbReference type="GO" id="GO:0005524">
    <property type="term" value="F:ATP binding"/>
    <property type="evidence" value="ECO:0007669"/>
    <property type="project" value="UniProtKB-UniRule"/>
</dbReference>
<dbReference type="GO" id="GO:0033785">
    <property type="term" value="F:heptose 7-phosphate kinase activity"/>
    <property type="evidence" value="ECO:0007669"/>
    <property type="project" value="UniProtKB-UniRule"/>
</dbReference>
<dbReference type="GO" id="GO:0033786">
    <property type="term" value="F:heptose-1-phosphate adenylyltransferase activity"/>
    <property type="evidence" value="ECO:0007669"/>
    <property type="project" value="UniProtKB-UniRule"/>
</dbReference>
<dbReference type="GO" id="GO:0016773">
    <property type="term" value="F:phosphotransferase activity, alcohol group as acceptor"/>
    <property type="evidence" value="ECO:0007669"/>
    <property type="project" value="InterPro"/>
</dbReference>
<dbReference type="GO" id="GO:0097171">
    <property type="term" value="P:ADP-L-glycero-beta-D-manno-heptose biosynthetic process"/>
    <property type="evidence" value="ECO:0007669"/>
    <property type="project" value="UniProtKB-UniPathway"/>
</dbReference>
<dbReference type="CDD" id="cd01172">
    <property type="entry name" value="RfaE_like"/>
    <property type="match status" value="1"/>
</dbReference>
<dbReference type="FunFam" id="3.40.1190.20:FF:000002">
    <property type="entry name" value="Bifunctional protein HldE"/>
    <property type="match status" value="1"/>
</dbReference>
<dbReference type="FunFam" id="3.40.50.620:FF:000028">
    <property type="entry name" value="Bifunctional protein HldE"/>
    <property type="match status" value="1"/>
</dbReference>
<dbReference type="Gene3D" id="3.40.1190.20">
    <property type="match status" value="1"/>
</dbReference>
<dbReference type="Gene3D" id="3.40.50.620">
    <property type="entry name" value="HUPs"/>
    <property type="match status" value="1"/>
</dbReference>
<dbReference type="HAMAP" id="MF_01603">
    <property type="entry name" value="HldE"/>
    <property type="match status" value="1"/>
</dbReference>
<dbReference type="InterPro" id="IPR023030">
    <property type="entry name" value="Bifunc_HldE"/>
</dbReference>
<dbReference type="InterPro" id="IPR002173">
    <property type="entry name" value="Carboh/pur_kinase_PfkB_CS"/>
</dbReference>
<dbReference type="InterPro" id="IPR004821">
    <property type="entry name" value="Cyt_trans-like"/>
</dbReference>
<dbReference type="InterPro" id="IPR011611">
    <property type="entry name" value="PfkB_dom"/>
</dbReference>
<dbReference type="InterPro" id="IPR011913">
    <property type="entry name" value="RfaE_dom_I"/>
</dbReference>
<dbReference type="InterPro" id="IPR011914">
    <property type="entry name" value="RfaE_dom_II"/>
</dbReference>
<dbReference type="InterPro" id="IPR029056">
    <property type="entry name" value="Ribokinase-like"/>
</dbReference>
<dbReference type="InterPro" id="IPR014729">
    <property type="entry name" value="Rossmann-like_a/b/a_fold"/>
</dbReference>
<dbReference type="NCBIfam" id="TIGR00125">
    <property type="entry name" value="cyt_tran_rel"/>
    <property type="match status" value="1"/>
</dbReference>
<dbReference type="NCBIfam" id="NF008454">
    <property type="entry name" value="PRK11316.1"/>
    <property type="match status" value="1"/>
</dbReference>
<dbReference type="NCBIfam" id="TIGR02198">
    <property type="entry name" value="rfaE_dom_I"/>
    <property type="match status" value="1"/>
</dbReference>
<dbReference type="NCBIfam" id="TIGR02199">
    <property type="entry name" value="rfaE_dom_II"/>
    <property type="match status" value="1"/>
</dbReference>
<dbReference type="PANTHER" id="PTHR46969">
    <property type="entry name" value="BIFUNCTIONAL PROTEIN HLDE"/>
    <property type="match status" value="1"/>
</dbReference>
<dbReference type="PANTHER" id="PTHR46969:SF1">
    <property type="entry name" value="BIFUNCTIONAL PROTEIN HLDE"/>
    <property type="match status" value="1"/>
</dbReference>
<dbReference type="Pfam" id="PF01467">
    <property type="entry name" value="CTP_transf_like"/>
    <property type="match status" value="1"/>
</dbReference>
<dbReference type="Pfam" id="PF00294">
    <property type="entry name" value="PfkB"/>
    <property type="match status" value="1"/>
</dbReference>
<dbReference type="SUPFAM" id="SSF52374">
    <property type="entry name" value="Nucleotidylyl transferase"/>
    <property type="match status" value="1"/>
</dbReference>
<dbReference type="SUPFAM" id="SSF53613">
    <property type="entry name" value="Ribokinase-like"/>
    <property type="match status" value="1"/>
</dbReference>
<dbReference type="PROSITE" id="PS00583">
    <property type="entry name" value="PFKB_KINASES_1"/>
    <property type="match status" value="1"/>
</dbReference>
<keyword id="KW-0067">ATP-binding</keyword>
<keyword id="KW-0119">Carbohydrate metabolism</keyword>
<keyword id="KW-0418">Kinase</keyword>
<keyword id="KW-0511">Multifunctional enzyme</keyword>
<keyword id="KW-0547">Nucleotide-binding</keyword>
<keyword id="KW-0548">Nucleotidyltransferase</keyword>
<keyword id="KW-0808">Transferase</keyword>
<evidence type="ECO:0000255" key="1">
    <source>
        <dbReference type="HAMAP-Rule" id="MF_01603"/>
    </source>
</evidence>
<gene>
    <name evidence="1" type="primary">hldE</name>
    <name type="ordered locus">VCM66_2360</name>
</gene>
<feature type="chain" id="PRO_1000185826" description="Bifunctional protein HldE">
    <location>
        <begin position="1"/>
        <end position="476"/>
    </location>
</feature>
<feature type="region of interest" description="Ribokinase">
    <location>
        <begin position="1"/>
        <end position="318"/>
    </location>
</feature>
<feature type="region of interest" description="Cytidylyltransferase">
    <location>
        <begin position="344"/>
        <end position="476"/>
    </location>
</feature>
<feature type="active site" evidence="1">
    <location>
        <position position="264"/>
    </location>
</feature>
<feature type="binding site" evidence="1">
    <location>
        <begin position="195"/>
        <end position="198"/>
    </location>
    <ligand>
        <name>ATP</name>
        <dbReference type="ChEBI" id="CHEBI:30616"/>
    </ligand>
</feature>
<organism>
    <name type="scientific">Vibrio cholerae serotype O1 (strain M66-2)</name>
    <dbReference type="NCBI Taxonomy" id="579112"/>
    <lineage>
        <taxon>Bacteria</taxon>
        <taxon>Pseudomonadati</taxon>
        <taxon>Pseudomonadota</taxon>
        <taxon>Gammaproteobacteria</taxon>
        <taxon>Vibrionales</taxon>
        <taxon>Vibrionaceae</taxon>
        <taxon>Vibrio</taxon>
    </lineage>
</organism>
<sequence>MKPVLPDYSKAGVLIVGDVMLDRYWYGPTGRISPEAPVPVVKVEQSEERPGGAANVAMNIASLGGHAHIIGLTGQDEPANVLANKLTSLKVHCDFVALPDYPTITKLRVLSRGQQLIRLDFEDKFENTDAQLILSRMESALPKVRAVILSDYAKGALEHVQQFIQKAKAAGVPVFIDPKGSDFERYRGASLLTPNMSEFEAVVGKVKSEQELVEKGFALIEKFDLGALLVTRSEHGMTLLRRGLEPFHLPTQAKEVYDVTGAGDTVISVLAASVAAGKALDEACALANAAAGVVVGKLGTSTVSTIELAEAVHGSKDTDYGVISEDALIEAVKKAQARGEKVVMTNGCFDILHAGHVSYLNHAAELGDRLIVAVNTDESVKRLKGPGRPVNSTDRRMAVLAGLGAVDWVVPFSEDTPQRLIAAVLPNLLVKGGDYKPEDIAGGKEVIAAGGEVKVLNFEEGCSTTEIIEAIKGGRG</sequence>
<accession>C3LQY0</accession>
<reference key="1">
    <citation type="journal article" date="2008" name="PLoS ONE">
        <title>A recalibrated molecular clock and independent origins for the cholera pandemic clones.</title>
        <authorList>
            <person name="Feng L."/>
            <person name="Reeves P.R."/>
            <person name="Lan R."/>
            <person name="Ren Y."/>
            <person name="Gao C."/>
            <person name="Zhou Z."/>
            <person name="Ren Y."/>
            <person name="Cheng J."/>
            <person name="Wang W."/>
            <person name="Wang J."/>
            <person name="Qian W."/>
            <person name="Li D."/>
            <person name="Wang L."/>
        </authorList>
    </citation>
    <scope>NUCLEOTIDE SEQUENCE [LARGE SCALE GENOMIC DNA]</scope>
    <source>
        <strain>M66-2</strain>
    </source>
</reference>
<protein>
    <recommendedName>
        <fullName evidence="1">Bifunctional protein HldE</fullName>
    </recommendedName>
    <domain>
        <recommendedName>
            <fullName evidence="1">D-beta-D-heptose 7-phosphate kinase</fullName>
            <ecNumber evidence="1">2.7.1.167</ecNumber>
        </recommendedName>
        <alternativeName>
            <fullName evidence="1">D-beta-D-heptose 7-phosphotransferase</fullName>
        </alternativeName>
        <alternativeName>
            <fullName evidence="1">D-glycero-beta-D-manno-heptose-7-phosphate kinase</fullName>
        </alternativeName>
    </domain>
    <domain>
        <recommendedName>
            <fullName evidence="1">D-beta-D-heptose 1-phosphate adenylyltransferase</fullName>
            <ecNumber evidence="1">2.7.7.70</ecNumber>
        </recommendedName>
        <alternativeName>
            <fullName evidence="1">D-glycero-beta-D-manno-heptose 1-phosphate adenylyltransferase</fullName>
        </alternativeName>
    </domain>
</protein>
<comment type="function">
    <text evidence="1">Catalyzes the phosphorylation of D-glycero-D-manno-heptose 7-phosphate at the C-1 position to selectively form D-glycero-beta-D-manno-heptose-1,7-bisphosphate.</text>
</comment>
<comment type="function">
    <text evidence="1">Catalyzes the ADP transfer from ATP to D-glycero-beta-D-manno-heptose 1-phosphate, yielding ADP-D-glycero-beta-D-manno-heptose.</text>
</comment>
<comment type="catalytic activity">
    <reaction evidence="1">
        <text>D-glycero-beta-D-manno-heptose 7-phosphate + ATP = D-glycero-beta-D-manno-heptose 1,7-bisphosphate + ADP + H(+)</text>
        <dbReference type="Rhea" id="RHEA:27473"/>
        <dbReference type="ChEBI" id="CHEBI:15378"/>
        <dbReference type="ChEBI" id="CHEBI:30616"/>
        <dbReference type="ChEBI" id="CHEBI:60204"/>
        <dbReference type="ChEBI" id="CHEBI:60208"/>
        <dbReference type="ChEBI" id="CHEBI:456216"/>
        <dbReference type="EC" id="2.7.1.167"/>
    </reaction>
</comment>
<comment type="catalytic activity">
    <reaction evidence="1">
        <text>D-glycero-beta-D-manno-heptose 1-phosphate + ATP + H(+) = ADP-D-glycero-beta-D-manno-heptose + diphosphate</text>
        <dbReference type="Rhea" id="RHEA:27465"/>
        <dbReference type="ChEBI" id="CHEBI:15378"/>
        <dbReference type="ChEBI" id="CHEBI:30616"/>
        <dbReference type="ChEBI" id="CHEBI:33019"/>
        <dbReference type="ChEBI" id="CHEBI:59967"/>
        <dbReference type="ChEBI" id="CHEBI:61593"/>
        <dbReference type="EC" id="2.7.7.70"/>
    </reaction>
</comment>
<comment type="pathway">
    <text evidence="1">Nucleotide-sugar biosynthesis; ADP-L-glycero-beta-D-manno-heptose biosynthesis; ADP-L-glycero-beta-D-manno-heptose from D-glycero-beta-D-manno-heptose 7-phosphate: step 1/4.</text>
</comment>
<comment type="pathway">
    <text evidence="1">Nucleotide-sugar biosynthesis; ADP-L-glycero-beta-D-manno-heptose biosynthesis; ADP-L-glycero-beta-D-manno-heptose from D-glycero-beta-D-manno-heptose 7-phosphate: step 3/4.</text>
</comment>
<comment type="subunit">
    <text evidence="1">Homodimer.</text>
</comment>
<comment type="similarity">
    <text evidence="1">In the N-terminal section; belongs to the carbohydrate kinase PfkB family.</text>
</comment>
<comment type="similarity">
    <text evidence="1">In the C-terminal section; belongs to the cytidylyltransferase family.</text>
</comment>
<proteinExistence type="inferred from homology"/>